<sequence length="296" mass="32131">MLNRFSYSSNAWHNLRVDGPDADGIAVIVLARSQSRNALTLPMLTDMVQLLSAMDADDSVKCIVFTGEGPFFCSGVDLTEGFGEIGKTRDTHRDAGGKLALAIHNCRKPTIAAINGTAVGVGITMTLPMSIRIAAKTAKISFPFVRRGIVADAASSFYLPRLIGYGRALHLFTTGALYPAESGLLHGLFSETVNAASSTLPRALEVARDIAVNASQVGVYLTRDLVYRSPRSPEQAHLLESAALYTRYQSRDFEEGVQSFLEKRKPRFQDTMREQSGEGVLDRGDCVVGLAFKPKL</sequence>
<reference key="1">
    <citation type="journal article" date="2002" name="Genetics">
        <title>A conditionally dispensable chromosome controls host-specific pathogenicity in the fungal plant pathogen Alternaria alternata.</title>
        <authorList>
            <person name="Hatta R."/>
            <person name="Ito K."/>
            <person name="Hosaki Y."/>
            <person name="Tanaka T."/>
            <person name="Tanaka A."/>
            <person name="Yamamoto M."/>
            <person name="Akimitsu K."/>
            <person name="Tsuge T."/>
        </authorList>
    </citation>
    <scope>NUCLEOTIDE SEQUENCE [GENOMIC DNA]</scope>
    <scope>FUNCTION</scope>
    <scope>DISRUPTION PHENOTYPE</scope>
    <scope>PATHWAY</scope>
    <source>
        <strain>NAF8</strain>
    </source>
</reference>
<reference key="2">
    <citation type="journal article" date="2005" name="J. Gen. Plant Pathol.">
        <title>Structural analysis of cosmid clone pcAFT-2 carrying AFT10-1 encoding an acyl-CoA dehydrogenase involved in AF-toxin production in the strawberry pathotype of Alternaria alternata.</title>
        <authorList>
            <person name="Ruswandi S."/>
            <person name="Kitani K."/>
            <person name="Akimitsu K."/>
            <person name="Tsuge T."/>
            <person name="Shiraishi T."/>
            <person name="Yamamoto M."/>
        </authorList>
    </citation>
    <scope>NUCLEOTIDE SEQUENCE [GENOMIC DNA]</scope>
    <scope>FUNCTION</scope>
    <source>
        <strain>NAF8</strain>
    </source>
</reference>
<reference key="3">
    <citation type="journal article" date="2014" name="New Phytol.">
        <title>Complex regulation of secondary metabolism controlling pathogenicity in the phytopathogenic fungus Alternaria alternata.</title>
        <authorList>
            <person name="Takaoka S."/>
            <person name="Kurata M."/>
            <person name="Harimoto Y."/>
            <person name="Hatta R."/>
            <person name="Yamamoto M."/>
            <person name="Akimitsu K."/>
            <person name="Tsuge T."/>
        </authorList>
    </citation>
    <scope>NUCLEOTIDE SEQUENCE [GENOMIC DNA]</scope>
    <source>
        <strain>NAF8</strain>
    </source>
</reference>
<reference key="4">
    <citation type="journal article" date="2004" name="Mol. Microbiol.">
        <title>Dissection of the host range of the fungal plant pathogen Alternaria alternata by modification of secondary metabolism.</title>
        <authorList>
            <person name="Ito K."/>
            <person name="Tanaka T."/>
            <person name="Hatta R."/>
            <person name="Yamamoto M."/>
            <person name="Akimitsu K."/>
            <person name="Tsuge T."/>
        </authorList>
    </citation>
    <scope>FUNCTION</scope>
    <source>
        <strain>NAF8</strain>
    </source>
</reference>
<reference key="5">
    <citation type="journal article" date="2008" name="Mol. Plant Microbe Interact.">
        <title>Functional analysis of a multicopy host-selective ACT-toxin biosynthesis gene in the tangerine pathotype of Alternaria alternata using RNA silencing.</title>
        <authorList>
            <person name="Miyamoto Y."/>
            <person name="Masunaka A."/>
            <person name="Tsuge T."/>
            <person name="Yamamoto M."/>
            <person name="Ohtani K."/>
            <person name="Fukumoto T."/>
            <person name="Gomi K."/>
            <person name="Peever T.L."/>
            <person name="Akimitsu K."/>
        </authorList>
    </citation>
    <scope>FUNCTION</scope>
    <source>
        <strain>NAF8</strain>
    </source>
</reference>
<reference key="6">
    <citation type="journal article" date="2013" name="FEMS Microbiol. Rev.">
        <title>Host-selective toxins produced by the plant pathogenic fungus Alternaria alternata.</title>
        <authorList>
            <person name="Tsuge T."/>
            <person name="Harimoto Y."/>
            <person name="Akimitsu K."/>
            <person name="Ohtani K."/>
            <person name="Kodama M."/>
            <person name="Akagi Y."/>
            <person name="Egusa M."/>
            <person name="Yamamoto M."/>
            <person name="Otani H."/>
        </authorList>
    </citation>
    <scope>REVIEW ON HOST-SELECTIVE TOXINS</scope>
</reference>
<evidence type="ECO:0000250" key="1">
    <source>
        <dbReference type="UniProtKB" id="Q9P4U9"/>
    </source>
</evidence>
<evidence type="ECO:0000269" key="2">
    <source>
    </source>
</evidence>
<evidence type="ECO:0000269" key="3">
    <source>
    </source>
</evidence>
<evidence type="ECO:0000269" key="4">
    <source>
    </source>
</evidence>
<evidence type="ECO:0000269" key="5">
    <source ref="2"/>
</evidence>
<evidence type="ECO:0000303" key="6">
    <source>
    </source>
</evidence>
<evidence type="ECO:0000303" key="7">
    <source>
    </source>
</evidence>
<evidence type="ECO:0000305" key="8"/>
<evidence type="ECO:0000305" key="9">
    <source>
    </source>
</evidence>
<organism>
    <name type="scientific">Alternaria alternata</name>
    <name type="common">Alternaria rot fungus</name>
    <name type="synonym">Torula alternata</name>
    <dbReference type="NCBI Taxonomy" id="5599"/>
    <lineage>
        <taxon>Eukaryota</taxon>
        <taxon>Fungi</taxon>
        <taxon>Dikarya</taxon>
        <taxon>Ascomycota</taxon>
        <taxon>Pezizomycotina</taxon>
        <taxon>Dothideomycetes</taxon>
        <taxon>Pleosporomycetidae</taxon>
        <taxon>Pleosporales</taxon>
        <taxon>Pleosporineae</taxon>
        <taxon>Pleosporaceae</taxon>
        <taxon>Alternaria</taxon>
        <taxon>Alternaria sect. Alternaria</taxon>
        <taxon>Alternaria alternata complex</taxon>
    </lineage>
</organism>
<keyword id="KW-0456">Lyase</keyword>
<keyword id="KW-0576">Peroxisome</keyword>
<keyword id="KW-0843">Virulence</keyword>
<gene>
    <name type="primary">AFT3-1</name>
    <name type="synonym">AFT3-2</name>
    <name type="synonym">AFT3-3</name>
</gene>
<proteinExistence type="inferred from homology"/>
<comment type="function">
    <text evidence="2 3 4 5 7">Enoyl-CoA hydratase; part of the gene clusters that mediate the biosynthesis of the host-selective toxins (HSTs) AF-toxins responsible for Alternaria black spot of strawberry disease by the strawberry pathotype (PubMed:12019223). AF-toxin I and III are valine derivatives of 2,3-dyhydroxy-isovaleric acid and 2-hydroxy-isovaleric acid respectively, while AF II is an isoleucine derivative of 2-hydroxy-valeric acid (PubMed:15066029, PubMed:22846083, Ref.2). These derivatives are bound to a 9,10-epoxy-8-hydroxy-9-methyl-decatrienoic acid (EDA) moiety (PubMed:15066029, PubMed:22846083, Ref.2). On cellular level, AF-toxins affect plasma membrane of susceptible cells and cause a sudden increase in loss of K(+) after a few minutes of toxin treatment (PubMed:22846083). The aldo-keto reductase AFTS1 catalyzes the conversion of 2-keto-isovaleric acid (2-KIV) to 2-hydroxy-isovaleric acid (2-HIV) by reduction of its ketone to an alcohol (PubMed:15066029). The acyl-CoA ligase AFT1, the hydrolase AFT2 and the enoyl-CoA hydratases AFT3 and AFT6, but also the polyketide synthase AFT9, the acyl-CoA dehydrogenase AFT10, the cytochrome P450 monooxygenase AFT11 and the oxidoreductase AFT12 are all involved in the biosynthesis of the AK-, AF- and ACT-toxin common EDA structural moiety (PubMed:12019223, PubMed:18986255, Ref.2). The exact function of each enzyme, and of additional enzymes identified within the AF-toxin clusters have still to be determined (PubMed:12019223, PubMed:18986255, Ref.2).</text>
</comment>
<comment type="catalytic activity">
    <reaction evidence="9">
        <text>a (3S)-3-hydroxyacyl-CoA = a (2E)-enoyl-CoA + H2O</text>
        <dbReference type="Rhea" id="RHEA:16105"/>
        <dbReference type="ChEBI" id="CHEBI:15377"/>
        <dbReference type="ChEBI" id="CHEBI:57318"/>
        <dbReference type="ChEBI" id="CHEBI:58856"/>
        <dbReference type="EC" id="4.2.1.17"/>
    </reaction>
</comment>
<comment type="catalytic activity">
    <reaction evidence="9">
        <text>a 4-saturated-(3S)-3-hydroxyacyl-CoA = a (3E)-enoyl-CoA + H2O</text>
        <dbReference type="Rhea" id="RHEA:20724"/>
        <dbReference type="ChEBI" id="CHEBI:15377"/>
        <dbReference type="ChEBI" id="CHEBI:58521"/>
        <dbReference type="ChEBI" id="CHEBI:137480"/>
        <dbReference type="EC" id="4.2.1.17"/>
    </reaction>
</comment>
<comment type="pathway">
    <text evidence="2">Mycotoxin biosynthesis.</text>
</comment>
<comment type="subcellular location">
    <subcellularLocation>
        <location evidence="1">Peroxisome</location>
    </subcellularLocation>
    <text evidence="1">The peroxisomal location requires the C-terminal tripeptide peroxisomal targeting signal.</text>
</comment>
<comment type="disruption phenotype">
    <text evidence="2">Abolishes the production of AF-toxins and their precuror 9,10-epoxy-8-hydroxy-9-methyl-decatrienoic acid (EDA); and impairs the pathogenicity (PubMed:12019223). Does not affect growth rate of cultures, sporulation, and spore germination (PubMed:12019223).</text>
</comment>
<comment type="miscellaneous">
    <text evidence="2">Gene clusters encoding host-selective toxins (HSTs) are localized on conditionally dispensable chromosomes (CDCs), also called supernumerary chromosomes, where they are present in multiple copies (PubMed:12019223). The CDCs are not essential for saprophytic growth but controls host-selective pathogenicity (PubMed:12019223).</text>
</comment>
<comment type="similarity">
    <text evidence="8">Belongs to the enoyl-CoA hydratase/isomerase family.</text>
</comment>
<protein>
    <recommendedName>
        <fullName evidence="6">Enoyl-CoA hydratase AFT3-1</fullName>
        <ecNumber evidence="9">4.2.1.17</ecNumber>
    </recommendedName>
    <alternativeName>
        <fullName evidence="6">AF-toxin biosynthesis protein 3-1</fullName>
    </alternativeName>
</protein>
<dbReference type="EC" id="4.2.1.17" evidence="9"/>
<dbReference type="EMBL" id="AB070713">
    <property type="protein sequence ID" value="BAB69078.1"/>
    <property type="molecule type" value="Genomic_DNA"/>
</dbReference>
<dbReference type="EMBL" id="AB179766">
    <property type="protein sequence ID" value="BAD97699.1"/>
    <property type="molecule type" value="Genomic_DNA"/>
</dbReference>
<dbReference type="EMBL" id="AB872925">
    <property type="protein sequence ID" value="BAO10623.1"/>
    <property type="molecule type" value="Genomic_DNA"/>
</dbReference>
<dbReference type="SMR" id="Q96VB3"/>
<dbReference type="VEuPathDB" id="FungiDB:CC77DRAFT_1025015"/>
<dbReference type="PHI-base" id="PHI:509"/>
<dbReference type="GO" id="GO:0005777">
    <property type="term" value="C:peroxisome"/>
    <property type="evidence" value="ECO:0007669"/>
    <property type="project" value="UniProtKB-SubCell"/>
</dbReference>
<dbReference type="GO" id="GO:0004300">
    <property type="term" value="F:enoyl-CoA hydratase activity"/>
    <property type="evidence" value="ECO:0007669"/>
    <property type="project" value="UniProtKB-EC"/>
</dbReference>
<dbReference type="CDD" id="cd06558">
    <property type="entry name" value="crotonase-like"/>
    <property type="match status" value="1"/>
</dbReference>
<dbReference type="Gene3D" id="3.90.226.10">
    <property type="entry name" value="2-enoyl-CoA Hydratase, Chain A, domain 1"/>
    <property type="match status" value="1"/>
</dbReference>
<dbReference type="Gene3D" id="1.10.12.10">
    <property type="entry name" value="Lyase 2-enoyl-coa Hydratase, Chain A, domain 2"/>
    <property type="match status" value="1"/>
</dbReference>
<dbReference type="InterPro" id="IPR029045">
    <property type="entry name" value="ClpP/crotonase-like_dom_sf"/>
</dbReference>
<dbReference type="InterPro" id="IPR051053">
    <property type="entry name" value="ECH/Chromodomain_protein"/>
</dbReference>
<dbReference type="InterPro" id="IPR001753">
    <property type="entry name" value="Enoyl-CoA_hydra/iso"/>
</dbReference>
<dbReference type="InterPro" id="IPR014748">
    <property type="entry name" value="Enoyl-CoA_hydra_C"/>
</dbReference>
<dbReference type="PANTHER" id="PTHR43684">
    <property type="match status" value="1"/>
</dbReference>
<dbReference type="PANTHER" id="PTHR43684:SF4">
    <property type="entry name" value="ENOYL-COA HYDRATASE_ISOMERASE FAMILY PROTEIN (AFU_ORTHOLOGUE AFUA_1G01890)"/>
    <property type="match status" value="1"/>
</dbReference>
<dbReference type="Pfam" id="PF00378">
    <property type="entry name" value="ECH_1"/>
    <property type="match status" value="1"/>
</dbReference>
<dbReference type="SUPFAM" id="SSF52096">
    <property type="entry name" value="ClpP/crotonase"/>
    <property type="match status" value="1"/>
</dbReference>
<name>AFT31_ALTAL</name>
<feature type="chain" id="PRO_0000444830" description="Enoyl-CoA hydratase AFT3-1">
    <location>
        <begin position="1"/>
        <end position="296"/>
    </location>
</feature>
<feature type="short sequence motif" description="Peroxisomal targeting signal type 1" evidence="1">
    <location>
        <begin position="294"/>
        <end position="296"/>
    </location>
</feature>
<accession>Q96VB3</accession>